<dbReference type="EMBL" id="AJ250129">
    <property type="protein sequence ID" value="CAB93581.2"/>
    <property type="molecule type" value="Genomic_DNA"/>
</dbReference>
<dbReference type="EMBL" id="AM406671">
    <property type="protein sequence ID" value="CAL98875.1"/>
    <property type="molecule type" value="Genomic_DNA"/>
</dbReference>
<dbReference type="RefSeq" id="WP_011835984.1">
    <property type="nucleotide sequence ID" value="NC_009004.1"/>
</dbReference>
<dbReference type="SMR" id="A2RNI5"/>
<dbReference type="STRING" id="416870.llmg_2311"/>
<dbReference type="KEGG" id="llm:llmg_2311"/>
<dbReference type="eggNOG" id="COG0531">
    <property type="taxonomic scope" value="Bacteria"/>
</dbReference>
<dbReference type="HOGENOM" id="CLU_007946_1_2_9"/>
<dbReference type="OrthoDB" id="9762947at2"/>
<dbReference type="PhylomeDB" id="A2RNI5"/>
<dbReference type="SABIO-RK" id="A2RNI5"/>
<dbReference type="Proteomes" id="UP000000364">
    <property type="component" value="Chromosome"/>
</dbReference>
<dbReference type="GO" id="GO:0005886">
    <property type="term" value="C:plasma membrane"/>
    <property type="evidence" value="ECO:0007669"/>
    <property type="project" value="UniProtKB-SubCell"/>
</dbReference>
<dbReference type="GO" id="GO:0015297">
    <property type="term" value="F:antiporter activity"/>
    <property type="evidence" value="ECO:0007669"/>
    <property type="project" value="UniProtKB-KW"/>
</dbReference>
<dbReference type="GO" id="GO:0006865">
    <property type="term" value="P:amino acid transport"/>
    <property type="evidence" value="ECO:0007669"/>
    <property type="project" value="UniProtKB-KW"/>
</dbReference>
<dbReference type="Gene3D" id="1.20.1740.10">
    <property type="entry name" value="Amino acid/polyamine transporter I"/>
    <property type="match status" value="1"/>
</dbReference>
<dbReference type="InterPro" id="IPR002293">
    <property type="entry name" value="AA/rel_permease1"/>
</dbReference>
<dbReference type="InterPro" id="IPR004754">
    <property type="entry name" value="Amino_acid_antiprt"/>
</dbReference>
<dbReference type="InterPro" id="IPR050367">
    <property type="entry name" value="APC_superfamily"/>
</dbReference>
<dbReference type="NCBIfam" id="TIGR00905">
    <property type="entry name" value="2A0302"/>
    <property type="match status" value="1"/>
</dbReference>
<dbReference type="PANTHER" id="PTHR42770">
    <property type="entry name" value="AMINO ACID TRANSPORTER-RELATED"/>
    <property type="match status" value="1"/>
</dbReference>
<dbReference type="PANTHER" id="PTHR42770:SF4">
    <property type="entry name" value="ARGININE_ORNITHINE ANTIPORTER-RELATED"/>
    <property type="match status" value="1"/>
</dbReference>
<dbReference type="Pfam" id="PF13520">
    <property type="entry name" value="AA_permease_2"/>
    <property type="match status" value="1"/>
</dbReference>
<dbReference type="PIRSF" id="PIRSF006060">
    <property type="entry name" value="AA_transporter"/>
    <property type="match status" value="1"/>
</dbReference>
<accession>A2RNI5</accession>
<accession>Q9K574</accession>
<comment type="function">
    <text evidence="2 3">Catalyzes electroneutral exchange between L-arginine and L-ornithine (PubMed:23144255, PubMed:26324452). Can also efficiently translocate L-histidine and L-lysine (PubMed:26324452). ArcD1 is the main L-arginine/L-ornithine exchanger in the arginine deiminase (ADI) pathway (PubMed:26324452).</text>
</comment>
<comment type="catalytic activity">
    <reaction evidence="3">
        <text>L-ornithine(in) + L-arginine(out) = L-ornithine(out) + L-arginine(in)</text>
        <dbReference type="Rhea" id="RHEA:34991"/>
        <dbReference type="ChEBI" id="CHEBI:32682"/>
        <dbReference type="ChEBI" id="CHEBI:46911"/>
    </reaction>
    <physiologicalReaction direction="left-to-right" evidence="3">
        <dbReference type="Rhea" id="RHEA:34992"/>
    </physiologicalReaction>
</comment>
<comment type="biophysicochemical properties">
    <kinetics>
        <KM evidence="3">5 uM for L-arginine</KM>
        <KM evidence="3">1 uM for L-ornithine</KM>
        <Vmax evidence="3">30.0 nmol/min/mg enzyme toward L-arginine</Vmax>
        <Vmax evidence="3">45.0 nmol/min/mg enzyme toward L-ornithine</Vmax>
    </kinetics>
</comment>
<comment type="subcellular location">
    <subcellularLocation>
        <location evidence="6">Cell membrane</location>
        <topology evidence="1">Multi-pass membrane protein</topology>
    </subcellularLocation>
</comment>
<comment type="disruption phenotype">
    <text evidence="3">Deletion results in loss of the growth advantage observed in the presence of high L-arginine in different growth media.</text>
</comment>
<comment type="similarity">
    <text evidence="6">Belongs to the amino acid-polyamine-organocation (APC) superfamily. Basic amino acid/polyamine antiporter (APA) (TC 2.A.3.2) family.</text>
</comment>
<proteinExistence type="evidence at protein level"/>
<feature type="chain" id="PRO_0000437969" description="Arginine/ornithine antiporter ArcD1">
    <location>
        <begin position="1"/>
        <end position="526"/>
    </location>
</feature>
<feature type="transmembrane region" description="Helical" evidence="1">
    <location>
        <begin position="8"/>
        <end position="28"/>
    </location>
</feature>
<feature type="transmembrane region" description="Helical" evidence="1">
    <location>
        <begin position="41"/>
        <end position="61"/>
    </location>
</feature>
<feature type="transmembrane region" description="Helical" evidence="1">
    <location>
        <begin position="88"/>
        <end position="108"/>
    </location>
</feature>
<feature type="transmembrane region" description="Helical" evidence="1">
    <location>
        <begin position="128"/>
        <end position="148"/>
    </location>
</feature>
<feature type="transmembrane region" description="Helical" evidence="1">
    <location>
        <begin position="160"/>
        <end position="180"/>
    </location>
</feature>
<feature type="transmembrane region" description="Helical" evidence="1">
    <location>
        <begin position="220"/>
        <end position="240"/>
    </location>
</feature>
<feature type="transmembrane region" description="Helical" evidence="1">
    <location>
        <begin position="255"/>
        <end position="275"/>
    </location>
</feature>
<feature type="transmembrane region" description="Helical" evidence="1">
    <location>
        <begin position="297"/>
        <end position="317"/>
    </location>
</feature>
<feature type="transmembrane region" description="Helical" evidence="1">
    <location>
        <begin position="354"/>
        <end position="374"/>
    </location>
</feature>
<feature type="transmembrane region" description="Helical" evidence="1">
    <location>
        <begin position="378"/>
        <end position="398"/>
    </location>
</feature>
<feature type="transmembrane region" description="Helical" evidence="1">
    <location>
        <begin position="407"/>
        <end position="427"/>
    </location>
</feature>
<feature type="transmembrane region" description="Helical" evidence="1">
    <location>
        <begin position="428"/>
        <end position="448"/>
    </location>
</feature>
<feature type="transmembrane region" description="Helical" evidence="1">
    <location>
        <begin position="466"/>
        <end position="486"/>
    </location>
</feature>
<feature type="transmembrane region" description="Helical" evidence="1">
    <location>
        <begin position="495"/>
        <end position="515"/>
    </location>
</feature>
<gene>
    <name evidence="4" type="primary">arcD1</name>
    <name evidence="7" type="synonym">arcD</name>
    <name evidence="8" type="ordered locus">llmg_2311</name>
</gene>
<organism>
    <name type="scientific">Lactococcus lactis subsp. cremoris (strain MG1363)</name>
    <dbReference type="NCBI Taxonomy" id="416870"/>
    <lineage>
        <taxon>Bacteria</taxon>
        <taxon>Bacillati</taxon>
        <taxon>Bacillota</taxon>
        <taxon>Bacilli</taxon>
        <taxon>Lactobacillales</taxon>
        <taxon>Streptococcaceae</taxon>
        <taxon>Lactococcus</taxon>
        <taxon>Lactococcus cremoris subsp. cremoris</taxon>
    </lineage>
</organism>
<evidence type="ECO:0000255" key="1"/>
<evidence type="ECO:0000269" key="2">
    <source>
    </source>
</evidence>
<evidence type="ECO:0000269" key="3">
    <source>
    </source>
</evidence>
<evidence type="ECO:0000303" key="4">
    <source>
    </source>
</evidence>
<evidence type="ECO:0000303" key="5">
    <source>
    </source>
</evidence>
<evidence type="ECO:0000305" key="6"/>
<evidence type="ECO:0000312" key="7">
    <source>
        <dbReference type="EMBL" id="CAB93581.2"/>
    </source>
</evidence>
<evidence type="ECO:0000312" key="8">
    <source>
        <dbReference type="EMBL" id="CAL98875.1"/>
    </source>
</evidence>
<reference key="1">
    <citation type="submission" date="2000-07" db="EMBL/GenBank/DDBJ databases">
        <title>Cloning, sequencing and analysis of the genes involved in the arginine deiminase pathway of Lactococus lactis.</title>
        <authorList>
            <person name="Aungpraphapornchai P."/>
            <person name="Mulholland F."/>
            <person name="Griffin H.G."/>
            <person name="Gasson M.J."/>
        </authorList>
    </citation>
    <scope>NUCLEOTIDE SEQUENCE [GENOMIC DNA]</scope>
    <source>
        <strain>MG1363</strain>
    </source>
</reference>
<reference key="2">
    <citation type="journal article" date="2007" name="J. Bacteriol.">
        <title>The complete genome sequence of the lactic acid bacterial paradigm Lactococcus lactis subsp. cremoris MG1363.</title>
        <authorList>
            <person name="Wegmann U."/>
            <person name="O'Connell-Motherway M."/>
            <person name="Zomer A."/>
            <person name="Buist G."/>
            <person name="Shearman C."/>
            <person name="Canchaya C."/>
            <person name="Ventura M."/>
            <person name="Goesmann A."/>
            <person name="Gasson M.J."/>
            <person name="Kuipers O.P."/>
            <person name="van Sinderen D."/>
            <person name="Kok J."/>
        </authorList>
    </citation>
    <scope>NUCLEOTIDE SEQUENCE [LARGE SCALE GENOMIC DNA]</scope>
    <source>
        <strain>MG1363</strain>
    </source>
</reference>
<reference key="3">
    <citation type="journal article" date="2013" name="J. Bacteriol.">
        <title>Cloning, expression, and functional characterization of secondary amino acid transporters of Lactococcus lactis.</title>
        <authorList>
            <person name="Trip H."/>
            <person name="Mulder N.L."/>
            <person name="Lolkema J.S."/>
        </authorList>
    </citation>
    <scope>FUNCTION</scope>
    <source>
        <strain>MG1363</strain>
    </source>
</reference>
<reference key="4">
    <citation type="journal article" date="2015" name="J. Bacteriol.">
        <title>ArcD1 and ArcD2 arginine/ornithine exchangers encoded in the arginine deiminase pathway gene cluster of Lactococcus lactis.</title>
        <authorList>
            <person name="Noens E.E."/>
            <person name="Kaczmarek M.B."/>
            <person name="Zygo M."/>
            <person name="Lolkema J.S."/>
        </authorList>
    </citation>
    <scope>FUNCTION</scope>
    <scope>CATALYTIC ACTIVITY</scope>
    <scope>BIOPHYSICOCHEMICAL PROPERTIES</scope>
    <scope>DISRUPTION PHENOTYPE</scope>
    <source>
        <strain>MG1363</strain>
    </source>
</reference>
<protein>
    <recommendedName>
        <fullName evidence="6">Arginine/ornithine antiporter ArcD1</fullName>
    </recommendedName>
    <alternativeName>
        <fullName evidence="5">Arginine/ornithine exchanger</fullName>
    </alternativeName>
</protein>
<keyword id="KW-0029">Amino-acid transport</keyword>
<keyword id="KW-0050">Antiport</keyword>
<keyword id="KW-1003">Cell membrane</keyword>
<keyword id="KW-0472">Membrane</keyword>
<keyword id="KW-0812">Transmembrane</keyword>
<keyword id="KW-1133">Transmembrane helix</keyword>
<keyword id="KW-0813">Transport</keyword>
<sequence length="526" mass="56406">MDAENKKGIGLAALVAIIVSGAIGGGVFNLSNDLATNASPGGVVISWIVIGFGILMLVLSLNHLVVNKPELSGVSDYARAGFGNMVGFISGWGYWLSAWAGNIAFAVLMMTSVDYFFPGVFQAKNGSLTILSVIVVSIVSWGLTLLVMRGVEGAAAINAIVLVAKLIPLFVFVIAGIVTFKAGVFSAHFWQNFVANTNADGVIKSLTWSNMTGGDLFSQVKGSLMVMIWVFVGIEGAAMMGDRAKRKSDAGKASIFGLIALLVIYILLSLLPFGFMSQQELANTGQPGLVHILNAMVGGWGGSLMAIGLVISLLGAWLSWTMLPVEATQQLSEQKLLPSWFGKLNDKGAPKNSLLLTQLIVQIFLIVTYFVADAYNVFVYLCTAVIMICYALVGLYLFKLGIQEKKTSNIIIGFIAAAFQILALYYSGWQFVWLSLILYAVGFILYALGKKEYGTKMSTTEVIATFILTVLGILAVFGVYGNWLGLQDALGIDGNTLLVAVVPLIVVTFIVYFVVRSDINKKGIKN</sequence>
<name>ARCD1_LACLM</name>